<evidence type="ECO:0000250" key="1"/>
<evidence type="ECO:0000255" key="2">
    <source>
        <dbReference type="HAMAP-Rule" id="MF_00047"/>
    </source>
</evidence>
<organism>
    <name type="scientific">Thermoanaerobacter sp. (strain X514)</name>
    <dbReference type="NCBI Taxonomy" id="399726"/>
    <lineage>
        <taxon>Bacteria</taxon>
        <taxon>Bacillati</taxon>
        <taxon>Bacillota</taxon>
        <taxon>Clostridia</taxon>
        <taxon>Thermoanaerobacterales</taxon>
        <taxon>Thermoanaerobacteraceae</taxon>
        <taxon>Thermoanaerobacter</taxon>
    </lineage>
</organism>
<sequence>MEKKKIAVLFGGQSGEHEVSLMSAKSIINNLDKDKYEIYMVGITKKGEWYLYRGDVGKIETGEWEKEGIPAIMGASTKYRGIITFEDGENGFYPIDVVFPVLHGPNGEDGTIQGLLELLDMPYVGANVLSSALCMDKVFTKRIFKEAGLPTPDFVVVYGKEIEDLEAIKKKIEHLGYPCFVKPANLGSSVGITKVHNEEELPGALKLAAKYDRKLLIERGIDAREIECSVLGNENPEASIAGEIVPSNEFYDYNAKYFDGGKSLLLIPAPLPDEKMEEVRKLAIKAYKALDLRGMARVDFLMDRNTGTLYLNEVNTIPGFTKISMYPKLWESSGKSYSTLLDELINLAVESHNEKCREW</sequence>
<gene>
    <name evidence="2" type="primary">ddl</name>
    <name type="ordered locus">Teth514_0610</name>
</gene>
<accession>B0K485</accession>
<comment type="function">
    <text evidence="2">Cell wall formation.</text>
</comment>
<comment type="catalytic activity">
    <reaction evidence="2">
        <text>2 D-alanine + ATP = D-alanyl-D-alanine + ADP + phosphate + H(+)</text>
        <dbReference type="Rhea" id="RHEA:11224"/>
        <dbReference type="ChEBI" id="CHEBI:15378"/>
        <dbReference type="ChEBI" id="CHEBI:30616"/>
        <dbReference type="ChEBI" id="CHEBI:43474"/>
        <dbReference type="ChEBI" id="CHEBI:57416"/>
        <dbReference type="ChEBI" id="CHEBI:57822"/>
        <dbReference type="ChEBI" id="CHEBI:456216"/>
        <dbReference type="EC" id="6.3.2.4"/>
    </reaction>
</comment>
<comment type="cofactor">
    <cofactor evidence="1">
        <name>Mg(2+)</name>
        <dbReference type="ChEBI" id="CHEBI:18420"/>
    </cofactor>
    <cofactor evidence="1">
        <name>Mn(2+)</name>
        <dbReference type="ChEBI" id="CHEBI:29035"/>
    </cofactor>
    <text evidence="1">Binds 2 magnesium or manganese ions per subunit.</text>
</comment>
<comment type="pathway">
    <text evidence="2">Cell wall biogenesis; peptidoglycan biosynthesis.</text>
</comment>
<comment type="subcellular location">
    <subcellularLocation>
        <location evidence="2">Cytoplasm</location>
    </subcellularLocation>
</comment>
<comment type="similarity">
    <text evidence="2">Belongs to the D-alanine--D-alanine ligase family.</text>
</comment>
<reference key="1">
    <citation type="submission" date="2008-01" db="EMBL/GenBank/DDBJ databases">
        <title>Complete sequence of Thermoanaerobacter sp. X514.</title>
        <authorList>
            <consortium name="US DOE Joint Genome Institute"/>
            <person name="Copeland A."/>
            <person name="Lucas S."/>
            <person name="Lapidus A."/>
            <person name="Barry K."/>
            <person name="Glavina del Rio T."/>
            <person name="Dalin E."/>
            <person name="Tice H."/>
            <person name="Pitluck S."/>
            <person name="Bruce D."/>
            <person name="Goodwin L."/>
            <person name="Saunders E."/>
            <person name="Brettin T."/>
            <person name="Detter J.C."/>
            <person name="Han C."/>
            <person name="Schmutz J."/>
            <person name="Larimer F."/>
            <person name="Land M."/>
            <person name="Hauser L."/>
            <person name="Kyrpides N."/>
            <person name="Kim E."/>
            <person name="Hemme C."/>
            <person name="Fields M.W."/>
            <person name="He Z."/>
            <person name="Zhou J."/>
            <person name="Richardson P."/>
        </authorList>
    </citation>
    <scope>NUCLEOTIDE SEQUENCE [LARGE SCALE GENOMIC DNA]</scope>
    <source>
        <strain>X514</strain>
    </source>
</reference>
<protein>
    <recommendedName>
        <fullName evidence="2">D-alanine--D-alanine ligase</fullName>
        <ecNumber evidence="2">6.3.2.4</ecNumber>
    </recommendedName>
    <alternativeName>
        <fullName evidence="2">D-Ala-D-Ala ligase</fullName>
    </alternativeName>
    <alternativeName>
        <fullName evidence="2">D-alanylalanine synthetase</fullName>
    </alternativeName>
</protein>
<name>DDL_THEPX</name>
<keyword id="KW-0067">ATP-binding</keyword>
<keyword id="KW-0133">Cell shape</keyword>
<keyword id="KW-0961">Cell wall biogenesis/degradation</keyword>
<keyword id="KW-0963">Cytoplasm</keyword>
<keyword id="KW-0436">Ligase</keyword>
<keyword id="KW-0460">Magnesium</keyword>
<keyword id="KW-0464">Manganese</keyword>
<keyword id="KW-0479">Metal-binding</keyword>
<keyword id="KW-0547">Nucleotide-binding</keyword>
<keyword id="KW-0573">Peptidoglycan synthesis</keyword>
<dbReference type="EC" id="6.3.2.4" evidence="2"/>
<dbReference type="EMBL" id="CP000923">
    <property type="protein sequence ID" value="ABY91918.1"/>
    <property type="molecule type" value="Genomic_DNA"/>
</dbReference>
<dbReference type="RefSeq" id="WP_009052136.1">
    <property type="nucleotide sequence ID" value="NC_010320.1"/>
</dbReference>
<dbReference type="SMR" id="B0K485"/>
<dbReference type="KEGG" id="tex:Teth514_0610"/>
<dbReference type="HOGENOM" id="CLU_039268_0_0_9"/>
<dbReference type="UniPathway" id="UPA00219"/>
<dbReference type="Proteomes" id="UP000002155">
    <property type="component" value="Chromosome"/>
</dbReference>
<dbReference type="GO" id="GO:0005829">
    <property type="term" value="C:cytosol"/>
    <property type="evidence" value="ECO:0007669"/>
    <property type="project" value="TreeGrafter"/>
</dbReference>
<dbReference type="GO" id="GO:0005524">
    <property type="term" value="F:ATP binding"/>
    <property type="evidence" value="ECO:0007669"/>
    <property type="project" value="UniProtKB-KW"/>
</dbReference>
<dbReference type="GO" id="GO:0008716">
    <property type="term" value="F:D-alanine-D-alanine ligase activity"/>
    <property type="evidence" value="ECO:0007669"/>
    <property type="project" value="UniProtKB-UniRule"/>
</dbReference>
<dbReference type="GO" id="GO:0046872">
    <property type="term" value="F:metal ion binding"/>
    <property type="evidence" value="ECO:0007669"/>
    <property type="project" value="UniProtKB-KW"/>
</dbReference>
<dbReference type="GO" id="GO:0071555">
    <property type="term" value="P:cell wall organization"/>
    <property type="evidence" value="ECO:0007669"/>
    <property type="project" value="UniProtKB-KW"/>
</dbReference>
<dbReference type="GO" id="GO:0009252">
    <property type="term" value="P:peptidoglycan biosynthetic process"/>
    <property type="evidence" value="ECO:0007669"/>
    <property type="project" value="UniProtKB-UniRule"/>
</dbReference>
<dbReference type="GO" id="GO:0008360">
    <property type="term" value="P:regulation of cell shape"/>
    <property type="evidence" value="ECO:0007669"/>
    <property type="project" value="UniProtKB-KW"/>
</dbReference>
<dbReference type="FunFam" id="3.30.1490.20:FF:000007">
    <property type="entry name" value="D-alanine--D-alanine ligase"/>
    <property type="match status" value="1"/>
</dbReference>
<dbReference type="FunFam" id="3.30.470.20:FF:000008">
    <property type="entry name" value="D-alanine--D-alanine ligase"/>
    <property type="match status" value="1"/>
</dbReference>
<dbReference type="Gene3D" id="3.40.50.20">
    <property type="match status" value="1"/>
</dbReference>
<dbReference type="Gene3D" id="3.30.1490.20">
    <property type="entry name" value="ATP-grasp fold, A domain"/>
    <property type="match status" value="1"/>
</dbReference>
<dbReference type="Gene3D" id="3.30.470.20">
    <property type="entry name" value="ATP-grasp fold, B domain"/>
    <property type="match status" value="1"/>
</dbReference>
<dbReference type="HAMAP" id="MF_00047">
    <property type="entry name" value="Dala_Dala_lig"/>
    <property type="match status" value="1"/>
</dbReference>
<dbReference type="InterPro" id="IPR011761">
    <property type="entry name" value="ATP-grasp"/>
</dbReference>
<dbReference type="InterPro" id="IPR013815">
    <property type="entry name" value="ATP_grasp_subdomain_1"/>
</dbReference>
<dbReference type="InterPro" id="IPR000291">
    <property type="entry name" value="D-Ala_lig_Van_CS"/>
</dbReference>
<dbReference type="InterPro" id="IPR005905">
    <property type="entry name" value="D_ala_D_ala"/>
</dbReference>
<dbReference type="InterPro" id="IPR011095">
    <property type="entry name" value="Dala_Dala_lig_C"/>
</dbReference>
<dbReference type="InterPro" id="IPR011127">
    <property type="entry name" value="Dala_Dala_lig_N"/>
</dbReference>
<dbReference type="InterPro" id="IPR016185">
    <property type="entry name" value="PreATP-grasp_dom_sf"/>
</dbReference>
<dbReference type="NCBIfam" id="TIGR01205">
    <property type="entry name" value="D_ala_D_alaTIGR"/>
    <property type="match status" value="1"/>
</dbReference>
<dbReference type="NCBIfam" id="NF002378">
    <property type="entry name" value="PRK01372.1"/>
    <property type="match status" value="1"/>
</dbReference>
<dbReference type="NCBIfam" id="NF002528">
    <property type="entry name" value="PRK01966.1-4"/>
    <property type="match status" value="1"/>
</dbReference>
<dbReference type="PANTHER" id="PTHR23132">
    <property type="entry name" value="D-ALANINE--D-ALANINE LIGASE"/>
    <property type="match status" value="1"/>
</dbReference>
<dbReference type="PANTHER" id="PTHR23132:SF25">
    <property type="entry name" value="D-ALANINE--D-ALANINE LIGASE A"/>
    <property type="match status" value="1"/>
</dbReference>
<dbReference type="Pfam" id="PF07478">
    <property type="entry name" value="Dala_Dala_lig_C"/>
    <property type="match status" value="1"/>
</dbReference>
<dbReference type="Pfam" id="PF01820">
    <property type="entry name" value="Dala_Dala_lig_N"/>
    <property type="match status" value="1"/>
</dbReference>
<dbReference type="PIRSF" id="PIRSF039102">
    <property type="entry name" value="Ddl/VanB"/>
    <property type="match status" value="1"/>
</dbReference>
<dbReference type="SUPFAM" id="SSF56059">
    <property type="entry name" value="Glutathione synthetase ATP-binding domain-like"/>
    <property type="match status" value="1"/>
</dbReference>
<dbReference type="SUPFAM" id="SSF52440">
    <property type="entry name" value="PreATP-grasp domain"/>
    <property type="match status" value="1"/>
</dbReference>
<dbReference type="PROSITE" id="PS50975">
    <property type="entry name" value="ATP_GRASP"/>
    <property type="match status" value="1"/>
</dbReference>
<dbReference type="PROSITE" id="PS00843">
    <property type="entry name" value="DALA_DALA_LIGASE_1"/>
    <property type="match status" value="1"/>
</dbReference>
<dbReference type="PROSITE" id="PS00844">
    <property type="entry name" value="DALA_DALA_LIGASE_2"/>
    <property type="match status" value="1"/>
</dbReference>
<proteinExistence type="inferred from homology"/>
<feature type="chain" id="PRO_0000341185" description="D-alanine--D-alanine ligase">
    <location>
        <begin position="1"/>
        <end position="359"/>
    </location>
</feature>
<feature type="domain" description="ATP-grasp" evidence="2">
    <location>
        <begin position="141"/>
        <end position="346"/>
    </location>
</feature>
<feature type="binding site" evidence="2">
    <location>
        <begin position="172"/>
        <end position="227"/>
    </location>
    <ligand>
        <name>ATP</name>
        <dbReference type="ChEBI" id="CHEBI:30616"/>
    </ligand>
</feature>
<feature type="binding site" evidence="2">
    <location>
        <position position="299"/>
    </location>
    <ligand>
        <name>Mg(2+)</name>
        <dbReference type="ChEBI" id="CHEBI:18420"/>
        <label>1</label>
    </ligand>
</feature>
<feature type="binding site" evidence="2">
    <location>
        <position position="313"/>
    </location>
    <ligand>
        <name>Mg(2+)</name>
        <dbReference type="ChEBI" id="CHEBI:18420"/>
        <label>1</label>
    </ligand>
</feature>
<feature type="binding site" evidence="2">
    <location>
        <position position="313"/>
    </location>
    <ligand>
        <name>Mg(2+)</name>
        <dbReference type="ChEBI" id="CHEBI:18420"/>
        <label>2</label>
    </ligand>
</feature>
<feature type="binding site" evidence="2">
    <location>
        <position position="315"/>
    </location>
    <ligand>
        <name>Mg(2+)</name>
        <dbReference type="ChEBI" id="CHEBI:18420"/>
        <label>2</label>
    </ligand>
</feature>